<comment type="function">
    <text evidence="1">May bind long-chain fatty acids, such as palmitate, and may play a role in lipid transport or fatty acid metabolism.</text>
</comment>
<name>Y1698_STRP1</name>
<keyword id="KW-0446">Lipid-binding</keyword>
<keyword id="KW-1185">Reference proteome</keyword>
<protein>
    <recommendedName>
        <fullName>DegV domain-containing protein SPy_1698/M5005_Spy1391</fullName>
    </recommendedName>
</protein>
<reference key="1">
    <citation type="journal article" date="2001" name="Proc. Natl. Acad. Sci. U.S.A.">
        <title>Complete genome sequence of an M1 strain of Streptococcus pyogenes.</title>
        <authorList>
            <person name="Ferretti J.J."/>
            <person name="McShan W.M."/>
            <person name="Ajdic D.J."/>
            <person name="Savic D.J."/>
            <person name="Savic G."/>
            <person name="Lyon K."/>
            <person name="Primeaux C."/>
            <person name="Sezate S."/>
            <person name="Suvorov A.N."/>
            <person name="Kenton S."/>
            <person name="Lai H.S."/>
            <person name="Lin S.P."/>
            <person name="Qian Y."/>
            <person name="Jia H.G."/>
            <person name="Najar F.Z."/>
            <person name="Ren Q."/>
            <person name="Zhu H."/>
            <person name="Song L."/>
            <person name="White J."/>
            <person name="Yuan X."/>
            <person name="Clifton S.W."/>
            <person name="Roe B.A."/>
            <person name="McLaughlin R.E."/>
        </authorList>
    </citation>
    <scope>NUCLEOTIDE SEQUENCE [LARGE SCALE GENOMIC DNA]</scope>
    <source>
        <strain>ATCC 700294 / SF370 / Serotype M1</strain>
    </source>
</reference>
<reference key="2">
    <citation type="journal article" date="2005" name="J. Infect. Dis.">
        <title>Evolutionary origin and emergence of a highly successful clone of serotype M1 group A Streptococcus involved multiple horizontal gene transfer events.</title>
        <authorList>
            <person name="Sumby P."/>
            <person name="Porcella S.F."/>
            <person name="Madrigal A.G."/>
            <person name="Barbian K.D."/>
            <person name="Virtaneva K."/>
            <person name="Ricklefs S.M."/>
            <person name="Sturdevant D.E."/>
            <person name="Graham M.R."/>
            <person name="Vuopio-Varkila J."/>
            <person name="Hoe N.P."/>
            <person name="Musser J.M."/>
        </authorList>
    </citation>
    <scope>NUCLEOTIDE SEQUENCE [LARGE SCALE GENOMIC DNA]</scope>
    <source>
        <strain>ATCC BAA-947 / MGAS5005 / Serotype M1</strain>
    </source>
</reference>
<accession>Q99YH7</accession>
<accession>Q48XB6</accession>
<organism>
    <name type="scientific">Streptococcus pyogenes serotype M1</name>
    <dbReference type="NCBI Taxonomy" id="301447"/>
    <lineage>
        <taxon>Bacteria</taxon>
        <taxon>Bacillati</taxon>
        <taxon>Bacillota</taxon>
        <taxon>Bacilli</taxon>
        <taxon>Lactobacillales</taxon>
        <taxon>Streptococcaceae</taxon>
        <taxon>Streptococcus</taxon>
    </lineage>
</organism>
<proteinExistence type="inferred from homology"/>
<feature type="chain" id="PRO_0000209808" description="DegV domain-containing protein SPy_1698/M5005_Spy1391">
    <location>
        <begin position="1"/>
        <end position="280"/>
    </location>
</feature>
<feature type="domain" description="DegV" evidence="3">
    <location>
        <begin position="3"/>
        <end position="280"/>
    </location>
</feature>
<feature type="binding site" evidence="2">
    <location>
        <position position="63"/>
    </location>
    <ligand>
        <name>hexadecanoate</name>
        <dbReference type="ChEBI" id="CHEBI:7896"/>
    </ligand>
</feature>
<feature type="binding site" evidence="2">
    <location>
        <position position="91"/>
    </location>
    <ligand>
        <name>hexadecanoate</name>
        <dbReference type="ChEBI" id="CHEBI:7896"/>
    </ligand>
</feature>
<sequence>MTWKIVTDSGCDLRSLTRQSKELRFERVPLTLQIGTEIFRDDDGLDIDNMMTTMYQSSKATTSSCPSPEAFLQAYRGADNVIVMTITGTLSGSHNSARLAKNELLEENPNVNIHLIDSLSAGGEMDLLVLELERLIKLGLSFEEVVKQITAYQQKTRLIFVLAKVDNLVKNGRLSKLVGKVIGLLNIRMVGKASNKGTLELLQKARGQKKAVSALIEEIQKEGYVGGKVYIAHAQNPKICEQISEKIKSLYPDAVIQTGRTSGLCSFYAEDGGLLMGYEI</sequence>
<dbReference type="EMBL" id="AE004092">
    <property type="protein sequence ID" value="AAK34450.1"/>
    <property type="molecule type" value="Genomic_DNA"/>
</dbReference>
<dbReference type="EMBL" id="CP000017">
    <property type="protein sequence ID" value="AAZ52009.1"/>
    <property type="molecule type" value="Genomic_DNA"/>
</dbReference>
<dbReference type="RefSeq" id="NP_269729.1">
    <property type="nucleotide sequence ID" value="NC_002737.2"/>
</dbReference>
<dbReference type="SMR" id="Q99YH7"/>
<dbReference type="PaxDb" id="1314-HKU360_01444"/>
<dbReference type="KEGG" id="spy:SPy_1698"/>
<dbReference type="KEGG" id="spz:M5005_Spy1391"/>
<dbReference type="PATRIC" id="fig|160490.10.peg.1477"/>
<dbReference type="HOGENOM" id="CLU_048251_2_0_9"/>
<dbReference type="OMA" id="EYVGIGY"/>
<dbReference type="Proteomes" id="UP000000750">
    <property type="component" value="Chromosome"/>
</dbReference>
<dbReference type="GO" id="GO:0008289">
    <property type="term" value="F:lipid binding"/>
    <property type="evidence" value="ECO:0007669"/>
    <property type="project" value="UniProtKB-KW"/>
</dbReference>
<dbReference type="Gene3D" id="3.30.1180.10">
    <property type="match status" value="1"/>
</dbReference>
<dbReference type="Gene3D" id="2.20.28.50">
    <property type="entry name" value="degv family protein"/>
    <property type="match status" value="1"/>
</dbReference>
<dbReference type="Gene3D" id="3.40.50.10440">
    <property type="entry name" value="Dihydroxyacetone kinase, domain 1"/>
    <property type="match status" value="1"/>
</dbReference>
<dbReference type="InterPro" id="IPR003797">
    <property type="entry name" value="DegV"/>
</dbReference>
<dbReference type="InterPro" id="IPR043168">
    <property type="entry name" value="DegV_C"/>
</dbReference>
<dbReference type="InterPro" id="IPR050270">
    <property type="entry name" value="DegV_domain_contain"/>
</dbReference>
<dbReference type="NCBIfam" id="TIGR00762">
    <property type="entry name" value="DegV"/>
    <property type="match status" value="1"/>
</dbReference>
<dbReference type="PANTHER" id="PTHR33434">
    <property type="entry name" value="DEGV DOMAIN-CONTAINING PROTEIN DR_1986-RELATED"/>
    <property type="match status" value="1"/>
</dbReference>
<dbReference type="PANTHER" id="PTHR33434:SF2">
    <property type="entry name" value="FATTY ACID-BINDING PROTEIN TM_1468"/>
    <property type="match status" value="1"/>
</dbReference>
<dbReference type="Pfam" id="PF02645">
    <property type="entry name" value="DegV"/>
    <property type="match status" value="1"/>
</dbReference>
<dbReference type="SUPFAM" id="SSF82549">
    <property type="entry name" value="DAK1/DegV-like"/>
    <property type="match status" value="1"/>
</dbReference>
<dbReference type="PROSITE" id="PS51482">
    <property type="entry name" value="DEGV"/>
    <property type="match status" value="1"/>
</dbReference>
<gene>
    <name type="ordered locus">SPy_1698</name>
    <name type="ordered locus">M5005_Spy1391</name>
</gene>
<evidence type="ECO:0000250" key="1"/>
<evidence type="ECO:0000250" key="2">
    <source>
        <dbReference type="UniProtKB" id="Q9X1H9"/>
    </source>
</evidence>
<evidence type="ECO:0000255" key="3">
    <source>
        <dbReference type="PROSITE-ProRule" id="PRU00815"/>
    </source>
</evidence>